<protein>
    <recommendedName>
        <fullName>Age-related maculopathy susceptibility protein 2</fullName>
    </recommendedName>
</protein>
<keyword id="KW-0913">Age-related macular degeneration</keyword>
<keyword id="KW-0963">Cytoplasm</keyword>
<keyword id="KW-1267">Proteomics identification</keyword>
<keyword id="KW-1185">Reference proteome</keyword>
<sequence length="107" mass="11437">MLRLYPGPMVTEAEGKGGPEMASLSSSVVPVSFISTLRESVLDPGVGGEGASDKQRSKLSLSHSMIPAAKIHTELCLPAFFSPAGTQRRFQQPQHHLTLSIIHTAAR</sequence>
<feature type="chain" id="PRO_0000342668" description="Age-related maculopathy susceptibility protein 2">
    <location>
        <begin position="1"/>
        <end position="107"/>
    </location>
</feature>
<feature type="region of interest" description="Disordered" evidence="1">
    <location>
        <begin position="1"/>
        <end position="21"/>
    </location>
</feature>
<feature type="sequence variant" id="VAR_044330" description="In dbSNP:rs10490923.">
    <original>R</original>
    <variation>H</variation>
    <location>
        <position position="3"/>
    </location>
</feature>
<feature type="sequence variant" id="VAR_044331" description="In dbSNP:rs10490924." evidence="2 3 4 5 6 7 8 9 10 11 12">
    <original>A</original>
    <variation>S</variation>
    <location>
        <position position="69"/>
    </location>
</feature>
<proteinExistence type="evidence at protein level"/>
<accession>P0C7Q2</accession>
<accession>B2Y7I5</accession>
<dbReference type="EMBL" id="BX842242">
    <property type="status" value="NOT_ANNOTATED_CDS"/>
    <property type="molecule type" value="Genomic_DNA"/>
</dbReference>
<dbReference type="EMBL" id="BC066349">
    <property type="status" value="NOT_ANNOTATED_CDS"/>
    <property type="molecule type" value="mRNA"/>
</dbReference>
<dbReference type="EMBL" id="EU427528">
    <property type="protein sequence ID" value="ACA35288.1"/>
    <property type="molecule type" value="Genomic_DNA"/>
</dbReference>
<dbReference type="CCDS" id="CCDS53585.1"/>
<dbReference type="RefSeq" id="NP_001093137.1">
    <property type="nucleotide sequence ID" value="NM_001099667.3"/>
</dbReference>
<dbReference type="BioGRID" id="132409">
    <property type="interactions" value="7"/>
</dbReference>
<dbReference type="IntAct" id="P0C7Q2">
    <property type="interactions" value="16"/>
</dbReference>
<dbReference type="STRING" id="9606.ENSP00000436682"/>
<dbReference type="BioMuta" id="ARMS2"/>
<dbReference type="DMDM" id="193806692"/>
<dbReference type="MassIVE" id="P0C7Q2"/>
<dbReference type="PaxDb" id="9606-ENSP00000436682"/>
<dbReference type="Antibodypedia" id="53254">
    <property type="antibodies" value="68 antibodies from 21 providers"/>
</dbReference>
<dbReference type="DNASU" id="387715"/>
<dbReference type="Ensembl" id="ENST00000528446.1">
    <property type="protein sequence ID" value="ENSP00000436682.1"/>
    <property type="gene ID" value="ENSG00000254636.1"/>
</dbReference>
<dbReference type="GeneID" id="387715"/>
<dbReference type="KEGG" id="hsa:387715"/>
<dbReference type="MANE-Select" id="ENST00000528446.1">
    <property type="protein sequence ID" value="ENSP00000436682.1"/>
    <property type="RefSeq nucleotide sequence ID" value="NM_001099667.3"/>
    <property type="RefSeq protein sequence ID" value="NP_001093137.1"/>
</dbReference>
<dbReference type="UCSC" id="uc001lgi.4">
    <property type="organism name" value="human"/>
</dbReference>
<dbReference type="AGR" id="HGNC:32685"/>
<dbReference type="CTD" id="387715"/>
<dbReference type="DisGeNET" id="387715"/>
<dbReference type="GeneCards" id="ARMS2"/>
<dbReference type="HGNC" id="HGNC:32685">
    <property type="gene designation" value="ARMS2"/>
</dbReference>
<dbReference type="HPA" id="ENSG00000254636">
    <property type="expression patterns" value="Tissue enhanced (placenta, testis)"/>
</dbReference>
<dbReference type="MalaCards" id="ARMS2"/>
<dbReference type="MIM" id="611313">
    <property type="type" value="gene"/>
</dbReference>
<dbReference type="MIM" id="613778">
    <property type="type" value="phenotype"/>
</dbReference>
<dbReference type="neXtProt" id="NX_P0C7Q2"/>
<dbReference type="OpenTargets" id="ENSG00000254636"/>
<dbReference type="PharmGKB" id="PA162376896"/>
<dbReference type="VEuPathDB" id="HostDB:ENSG00000254636"/>
<dbReference type="eggNOG" id="ENOG502TERZ">
    <property type="taxonomic scope" value="Eukaryota"/>
</dbReference>
<dbReference type="GeneTree" id="ENSGT00650000095054"/>
<dbReference type="HOGENOM" id="CLU_2222374_0_0_1"/>
<dbReference type="InParanoid" id="P0C7Q2"/>
<dbReference type="OMA" id="HSMIPAA"/>
<dbReference type="OrthoDB" id="9535792at2759"/>
<dbReference type="PAN-GO" id="P0C7Q2">
    <property type="GO annotations" value="0 GO annotations based on evolutionary models"/>
</dbReference>
<dbReference type="PathwayCommons" id="P0C7Q2"/>
<dbReference type="SignaLink" id="P0C7Q2"/>
<dbReference type="BioGRID-ORCS" id="387715">
    <property type="hits" value="13 hits in 1145 CRISPR screens"/>
</dbReference>
<dbReference type="GeneWiki" id="ARMS2"/>
<dbReference type="GenomeRNAi" id="387715"/>
<dbReference type="Pharos" id="P0C7Q2">
    <property type="development level" value="Tbio"/>
</dbReference>
<dbReference type="PRO" id="PR:P0C7Q2"/>
<dbReference type="Proteomes" id="UP000005640">
    <property type="component" value="Chromosome 10"/>
</dbReference>
<dbReference type="RNAct" id="P0C7Q2">
    <property type="molecule type" value="protein"/>
</dbReference>
<dbReference type="Bgee" id="ENSG00000254636">
    <property type="expression patterns" value="Expressed in primordial germ cell in gonad and 76 other cell types or tissues"/>
</dbReference>
<dbReference type="GO" id="GO:0005739">
    <property type="term" value="C:mitochondrion"/>
    <property type="evidence" value="ECO:0000314"/>
    <property type="project" value="BHF-UCL"/>
</dbReference>
<dbReference type="GO" id="GO:0001917">
    <property type="term" value="C:photoreceptor inner segment"/>
    <property type="evidence" value="ECO:0000314"/>
    <property type="project" value="BHF-UCL"/>
</dbReference>
<dbReference type="GO" id="GO:0001895">
    <property type="term" value="P:retina homeostasis"/>
    <property type="evidence" value="ECO:0000315"/>
    <property type="project" value="BHF-UCL"/>
</dbReference>
<name>ARMS2_HUMAN</name>
<evidence type="ECO:0000256" key="1">
    <source>
        <dbReference type="SAM" id="MobiDB-lite"/>
    </source>
</evidence>
<evidence type="ECO:0000269" key="2">
    <source>
    </source>
</evidence>
<evidence type="ECO:0000269" key="3">
    <source>
    </source>
</evidence>
<evidence type="ECO:0000269" key="4">
    <source>
    </source>
</evidence>
<evidence type="ECO:0000269" key="5">
    <source>
    </source>
</evidence>
<evidence type="ECO:0000269" key="6">
    <source>
    </source>
</evidence>
<evidence type="ECO:0000269" key="7">
    <source>
    </source>
</evidence>
<evidence type="ECO:0000269" key="8">
    <source>
    </source>
</evidence>
<evidence type="ECO:0000269" key="9">
    <source>
    </source>
</evidence>
<evidence type="ECO:0000269" key="10">
    <source>
    </source>
</evidence>
<evidence type="ECO:0000269" key="11">
    <source>
    </source>
</evidence>
<evidence type="ECO:0000269" key="12">
    <source>
    </source>
</evidence>
<evidence type="ECO:0000269" key="13">
    <source>
    </source>
</evidence>
<comment type="interaction">
    <interactant intactId="EBI-21986906">
        <id>P0C7Q2</id>
    </interactant>
    <interactant intactId="EBI-9038570">
        <id>P27918</id>
        <label>CFP</label>
    </interactant>
    <organismsDiffer>false</organismsDiffer>
    <experiments>8</experiments>
</comment>
<comment type="interaction">
    <interactant intactId="EBI-21986906">
        <id>P0C7Q2</id>
    </interactant>
    <interactant intactId="EBI-2806183">
        <id>Q96RW7</id>
        <label>HMCN1</label>
    </interactant>
    <organismsDiffer>false</organismsDiffer>
    <experiments>4</experiments>
</comment>
<comment type="subcellular location">
    <subcellularLocation>
        <location evidence="2 13">Cytoplasm</location>
    </subcellularLocation>
</comment>
<comment type="tissue specificity">
    <text evidence="9">Detected in retina and placenta.</text>
</comment>
<comment type="disease" evidence="2 3 4 5 6 7 8 9 10 11 12">
    <disease id="DI-00061">
        <name>Macular degeneration, age-related, 8</name>
        <acronym>ARMD8</acronym>
        <description>A form of age-related macular degeneration, a multifactorial eye disease and the most common cause of irreversible vision loss in the developed world. In most patients, the disease is manifest as ophthalmoscopically visible yellowish accumulations of protein and lipid that lie beneath the retinal pigment epithelium and within an elastin-containing structure known as Bruch membrane.</description>
        <dbReference type="MIM" id="613778"/>
    </disease>
    <text>Disease susceptibility is associated with variants affecting the gene represented in this entry.</text>
</comment>
<gene>
    <name type="primary">ARMS2</name>
</gene>
<reference key="1">
    <citation type="journal article" date="2004" name="Nature">
        <title>The DNA sequence and comparative analysis of human chromosome 10.</title>
        <authorList>
            <person name="Deloukas P."/>
            <person name="Earthrowl M.E."/>
            <person name="Grafham D.V."/>
            <person name="Rubenfield M."/>
            <person name="French L."/>
            <person name="Steward C.A."/>
            <person name="Sims S.K."/>
            <person name="Jones M.C."/>
            <person name="Searle S."/>
            <person name="Scott C."/>
            <person name="Howe K."/>
            <person name="Hunt S.E."/>
            <person name="Andrews T.D."/>
            <person name="Gilbert J.G.R."/>
            <person name="Swarbreck D."/>
            <person name="Ashurst J.L."/>
            <person name="Taylor A."/>
            <person name="Battles J."/>
            <person name="Bird C.P."/>
            <person name="Ainscough R."/>
            <person name="Almeida J.P."/>
            <person name="Ashwell R.I.S."/>
            <person name="Ambrose K.D."/>
            <person name="Babbage A.K."/>
            <person name="Bagguley C.L."/>
            <person name="Bailey J."/>
            <person name="Banerjee R."/>
            <person name="Bates K."/>
            <person name="Beasley H."/>
            <person name="Bray-Allen S."/>
            <person name="Brown A.J."/>
            <person name="Brown J.Y."/>
            <person name="Burford D.C."/>
            <person name="Burrill W."/>
            <person name="Burton J."/>
            <person name="Cahill P."/>
            <person name="Camire D."/>
            <person name="Carter N.P."/>
            <person name="Chapman J.C."/>
            <person name="Clark S.Y."/>
            <person name="Clarke G."/>
            <person name="Clee C.M."/>
            <person name="Clegg S."/>
            <person name="Corby N."/>
            <person name="Coulson A."/>
            <person name="Dhami P."/>
            <person name="Dutta I."/>
            <person name="Dunn M."/>
            <person name="Faulkner L."/>
            <person name="Frankish A."/>
            <person name="Frankland J.A."/>
            <person name="Garner P."/>
            <person name="Garnett J."/>
            <person name="Gribble S."/>
            <person name="Griffiths C."/>
            <person name="Grocock R."/>
            <person name="Gustafson E."/>
            <person name="Hammond S."/>
            <person name="Harley J.L."/>
            <person name="Hart E."/>
            <person name="Heath P.D."/>
            <person name="Ho T.P."/>
            <person name="Hopkins B."/>
            <person name="Horne J."/>
            <person name="Howden P.J."/>
            <person name="Huckle E."/>
            <person name="Hynds C."/>
            <person name="Johnson C."/>
            <person name="Johnson D."/>
            <person name="Kana A."/>
            <person name="Kay M."/>
            <person name="Kimberley A.M."/>
            <person name="Kershaw J.K."/>
            <person name="Kokkinaki M."/>
            <person name="Laird G.K."/>
            <person name="Lawlor S."/>
            <person name="Lee H.M."/>
            <person name="Leongamornlert D.A."/>
            <person name="Laird G."/>
            <person name="Lloyd C."/>
            <person name="Lloyd D.M."/>
            <person name="Loveland J."/>
            <person name="Lovell J."/>
            <person name="McLaren S."/>
            <person name="McLay K.E."/>
            <person name="McMurray A."/>
            <person name="Mashreghi-Mohammadi M."/>
            <person name="Matthews L."/>
            <person name="Milne S."/>
            <person name="Nickerson T."/>
            <person name="Nguyen M."/>
            <person name="Overton-Larty E."/>
            <person name="Palmer S.A."/>
            <person name="Pearce A.V."/>
            <person name="Peck A.I."/>
            <person name="Pelan S."/>
            <person name="Phillimore B."/>
            <person name="Porter K."/>
            <person name="Rice C.M."/>
            <person name="Rogosin A."/>
            <person name="Ross M.T."/>
            <person name="Sarafidou T."/>
            <person name="Sehra H.K."/>
            <person name="Shownkeen R."/>
            <person name="Skuce C.D."/>
            <person name="Smith M."/>
            <person name="Standring L."/>
            <person name="Sycamore N."/>
            <person name="Tester J."/>
            <person name="Thorpe A."/>
            <person name="Torcasso W."/>
            <person name="Tracey A."/>
            <person name="Tromans A."/>
            <person name="Tsolas J."/>
            <person name="Wall M."/>
            <person name="Walsh J."/>
            <person name="Wang H."/>
            <person name="Weinstock K."/>
            <person name="West A.P."/>
            <person name="Willey D.L."/>
            <person name="Whitehead S.L."/>
            <person name="Wilming L."/>
            <person name="Wray P.W."/>
            <person name="Young L."/>
            <person name="Chen Y."/>
            <person name="Lovering R.C."/>
            <person name="Moschonas N.K."/>
            <person name="Siebert R."/>
            <person name="Fechtel K."/>
            <person name="Bentley D."/>
            <person name="Durbin R.M."/>
            <person name="Hubbard T."/>
            <person name="Doucette-Stamm L."/>
            <person name="Beck S."/>
            <person name="Smith D.R."/>
            <person name="Rogers J."/>
        </authorList>
    </citation>
    <scope>NUCLEOTIDE SEQUENCE [LARGE SCALE GENOMIC DNA]</scope>
</reference>
<reference key="2">
    <citation type="journal article" date="2004" name="Genome Res.">
        <title>The status, quality, and expansion of the NIH full-length cDNA project: the Mammalian Gene Collection (MGC).</title>
        <authorList>
            <consortium name="The MGC Project Team"/>
        </authorList>
    </citation>
    <scope>NUCLEOTIDE SEQUENCE [LARGE SCALE MRNA]</scope>
</reference>
<reference key="3">
    <citation type="journal article" date="2008" name="Nat. Genet.">
        <title>Age-related macular degeneration is associated with an unstable ARMS2 (LOC387715) mRNA.</title>
        <authorList>
            <person name="Fritsche L.G."/>
            <person name="Loenhardt T."/>
            <person name="Janssen A."/>
            <person name="Fisher S.A."/>
            <person name="Rivera A."/>
            <person name="Keilhauer C.N."/>
            <person name="Weber B.H."/>
        </authorList>
    </citation>
    <scope>NUCLEOTIDE SEQUENCE [GENOMIC DNA] OF 18-99</scope>
</reference>
<reference key="4">
    <citation type="journal article" date="2005" name="Hum. Mol. Genet.">
        <title>Hypothetical LOC387715 is a second major susceptibility gene for age-related macular degeneration, contributing independently of complement factor H to disease risk.</title>
        <authorList>
            <person name="Rivera A."/>
            <person name="Fisher S.A."/>
            <person name="Fritsche L.G."/>
            <person name="Keilhauer C.N."/>
            <person name="Lichtner P."/>
            <person name="Meitinger T."/>
            <person name="Weber B.H.F."/>
        </authorList>
    </citation>
    <scope>SUBCELLULAR LOCATION</scope>
    <scope>INVOLVEMENT IN ARMD8</scope>
    <scope>VARIANT SER-69</scope>
</reference>
<reference key="5">
    <citation type="journal article" date="2007" name="Proc. Natl. Acad. Sci. U.S.A.">
        <title>A variant of mitochondrial protein LOC387715/ARMS2, not HTRA1, is strongly associated with age-related macular degeneration.</title>
        <authorList>
            <person name="Kanda A."/>
            <person name="Chen W."/>
            <person name="Othman M."/>
            <person name="Branham K.E.H."/>
            <person name="Brooks M."/>
            <person name="Khanna R."/>
            <person name="He S."/>
            <person name="Lyons R."/>
            <person name="Abecasis G.R."/>
            <person name="Swaroop A."/>
        </authorList>
    </citation>
    <scope>PRELIMINARY SUBCELLULAR LOCATION</scope>
    <scope>TISSUE SPECIFICITY</scope>
    <scope>INVOLVEMENT IN ARMD8</scope>
    <scope>VARIANT SER-69</scope>
</reference>
<reference key="6">
    <citation type="journal article" date="2007" name="Protein Expr. Purif.">
        <title>Expression of recombinant protein encoded by LOC387715 in Escherichia coli.</title>
        <authorList>
            <person name="Chen D."/>
            <person name="Langford M.P."/>
            <person name="Duggan C."/>
            <person name="Madden B.J."/>
            <person name="Edwards A.O."/>
        </authorList>
    </citation>
    <scope>PURIFICATION OF RECOMBINANT PROTEIN</scope>
</reference>
<reference key="7">
    <citation type="journal article" date="2006" name="Am. J. Hum. Genet.">
        <title>Cigarette smoking strongly modifies the association of LOC387715 and age-related macular degeneration.</title>
        <authorList>
            <person name="Schmidt S."/>
            <person name="Hauser M.A."/>
            <person name="Scott W.K."/>
            <person name="Postel E.A."/>
            <person name="Agarwal A."/>
            <person name="Gallins P."/>
            <person name="Wong F."/>
            <person name="Chen Y.S."/>
            <person name="Spencer K."/>
            <person name="Schnetz-Boutaud N."/>
            <person name="Haines J.L."/>
            <person name="Pericak-Vance M.A."/>
        </authorList>
    </citation>
    <scope>INVOLVEMENT IN ARMD8</scope>
    <scope>VARIANT SER-69</scope>
</reference>
<reference key="8">
    <citation type="journal article" date="2006" name="Hum. Mol. Genet.">
        <title>CFH, ELOVL4, PLEKHA1 and LOC387715 genes and susceptibility to age-related maculopathy: AREDS and CHS cohorts and meta-analyses.</title>
        <authorList>
            <person name="Conley Y.P."/>
            <person name="Jakobsdottir J."/>
            <person name="Mah T."/>
            <person name="Weeks D.E."/>
            <person name="Klein R."/>
            <person name="Kuller L."/>
            <person name="Ferrell R.E."/>
            <person name="Gorin M.B."/>
        </authorList>
    </citation>
    <scope>INVOLVEMENT IN ARMD8</scope>
    <scope>VARIANT SER-69</scope>
</reference>
<reference key="9">
    <citation type="journal article" date="2006" name="Nat. Genet.">
        <title>Common variation in three genes, including a noncoding variant in CFH, strongly influences risk of age-related macular degeneration.</title>
        <authorList>
            <person name="Maller J."/>
            <person name="George S."/>
            <person name="Purcell S."/>
            <person name="Fagerness J."/>
            <person name="Altshuler D."/>
            <person name="Daly M.J."/>
            <person name="Seddon J.M."/>
        </authorList>
    </citation>
    <scope>INVOLVEMENT IN ARMD8</scope>
    <scope>VARIANT SER-69</scope>
</reference>
<reference key="10">
    <citation type="journal article" date="2006" name="Science">
        <title>HTRA1 promoter polymorphism in wet age-related macular degeneration.</title>
        <authorList>
            <person name="Dewan A."/>
            <person name="Liu M."/>
            <person name="Hartman S."/>
            <person name="Zhang S.S.-M."/>
            <person name="Liu D.T.L."/>
            <person name="Zhao C."/>
            <person name="Tam P.O.S."/>
            <person name="Chan W.M."/>
            <person name="Lam D.S.C."/>
            <person name="Snyder M."/>
            <person name="Barnstable C."/>
            <person name="Pang C.P."/>
            <person name="Hoh J."/>
        </authorList>
    </citation>
    <scope>INVOLVEMENT IN ARMD8</scope>
    <scope>VARIANT SER-69</scope>
</reference>
<reference key="11">
    <citation type="journal article" date="2007" name="Arch. Ophthalmol.">
        <title>A prospective study of 2 major age-related macular degeneration susceptibility alleles and interactions with modifiable risk factors.</title>
        <authorList>
            <person name="Schaumberg D.A."/>
            <person name="Hankinson S.E."/>
            <person name="Guo Q."/>
            <person name="Rimm E."/>
            <person name="Hunter D.J."/>
        </authorList>
    </citation>
    <scope>INVOLVEMENT IN ARMD8</scope>
    <scope>VARIANT SER-69</scope>
</reference>
<reference key="12">
    <citation type="journal article" date="2008" name="Invest. Ophthalmol. Vis. Sci.">
        <title>Variants in the 10q26 gene cluster (LOC387715 and HTRA1) exhibit enhanced risk of age-related macular degeneration along with CFH in Indian patients.</title>
        <authorList>
            <person name="Kaur I."/>
            <person name="Katta S."/>
            <person name="Hussain A."/>
            <person name="Hussain N."/>
            <person name="Mathai A."/>
            <person name="Narayanan R."/>
            <person name="Hussain A."/>
            <person name="Reddy R.K."/>
            <person name="Majji A.B."/>
            <person name="Das T."/>
            <person name="Chakrabarti S."/>
        </authorList>
    </citation>
    <scope>INVOLVEMENT IN ARMD8</scope>
    <scope>VARIANT SER-69</scope>
</reference>
<reference key="13">
    <citation type="journal article" date="2008" name="Ophthalmology">
        <title>Age-related macular degeneration genetics.</title>
        <authorList>
            <person name="Recalde S."/>
            <person name="Fernandez-Robredo P."/>
            <person name="Altarriba M."/>
            <person name="Salinas-Alaman A."/>
            <person name="Garcia-Layana A."/>
        </authorList>
    </citation>
    <scope>INVOLVEMENT IN ARMD8</scope>
    <scope>VARIANT SER-69</scope>
</reference>
<reference key="14">
    <citation type="journal article" date="2008" name="Ophthalmology">
        <title>The LOC387715 polymorphism, inflammatory markers, smoking, and age-related macular degeneration. A population-based case-control study.</title>
        <authorList>
            <person name="Wang J.J."/>
            <person name="Ross R.J."/>
            <person name="Tuo J."/>
            <person name="Burlutsky G."/>
            <person name="Tan A.G."/>
            <person name="Chan C.-C."/>
            <person name="Favaloro E.J."/>
            <person name="Williams A."/>
            <person name="Mitchell P."/>
        </authorList>
    </citation>
    <scope>INVOLVEMENT IN ARMD8</scope>
    <scope>VARIANT SER-69</scope>
</reference>
<reference key="15">
    <citation type="journal article" date="2008" name="Ophthalmology">
        <title>CFH and LOC387715/ARMS2 genotypes and treatment with antioxidants and zinc for age-related macular degeneration.</title>
        <authorList>
            <person name="Klein M.L."/>
            <person name="Francis P.J."/>
            <person name="Rosner B."/>
            <person name="Reynolds R."/>
            <person name="Hamon S.C."/>
            <person name="Schultz D.W."/>
            <person name="Ott J."/>
            <person name="Seddon J.M."/>
        </authorList>
    </citation>
    <scope>INVOLVEMENT IN ARMD8</scope>
    <scope>VARIANT SER-69</scope>
</reference>
<reference key="16">
    <citation type="journal article" date="2009" name="Invest. Ophthalmol. Vis. Sci.">
        <title>Localization of age-related macular degeneration-associated ARMS2 in cytosol, not mitochondria.</title>
        <authorList>
            <person name="Wang G."/>
            <person name="Spencer K.L."/>
            <person name="Court B.L."/>
            <person name="Olson L.M."/>
            <person name="Scott W.K."/>
            <person name="Haines J.L."/>
            <person name="Pericak-Vance M.A."/>
        </authorList>
    </citation>
    <scope>SUBCELLULAR LOCATION</scope>
    <source>
        <tissue>Retinal pigment epithelium</tissue>
    </source>
</reference>
<organism>
    <name type="scientific">Homo sapiens</name>
    <name type="common">Human</name>
    <dbReference type="NCBI Taxonomy" id="9606"/>
    <lineage>
        <taxon>Eukaryota</taxon>
        <taxon>Metazoa</taxon>
        <taxon>Chordata</taxon>
        <taxon>Craniata</taxon>
        <taxon>Vertebrata</taxon>
        <taxon>Euteleostomi</taxon>
        <taxon>Mammalia</taxon>
        <taxon>Eutheria</taxon>
        <taxon>Euarchontoglires</taxon>
        <taxon>Primates</taxon>
        <taxon>Haplorrhini</taxon>
        <taxon>Catarrhini</taxon>
        <taxon>Hominidae</taxon>
        <taxon>Homo</taxon>
    </lineage>
</organism>